<reference evidence="4" key="1">
    <citation type="journal article" date="2004" name="Genome Res.">
        <title>The status, quality, and expansion of the NIH full-length cDNA project: the Mammalian Gene Collection (MGC).</title>
        <authorList>
            <consortium name="The MGC Project Team"/>
        </authorList>
    </citation>
    <scope>NUCLEOTIDE SEQUENCE [LARGE SCALE MRNA]</scope>
    <source>
        <tissue evidence="4">Placenta</tissue>
    </source>
</reference>
<reference key="2">
    <citation type="journal article" date="2012" name="Nat. Commun.">
        <title>Quantitative maps of protein phosphorylation sites across 14 different rat organs and tissues.</title>
        <authorList>
            <person name="Lundby A."/>
            <person name="Secher A."/>
            <person name="Lage K."/>
            <person name="Nordsborg N.B."/>
            <person name="Dmytriyev A."/>
            <person name="Lundby C."/>
            <person name="Olsen J.V."/>
        </authorList>
    </citation>
    <scope>PHOSPHORYLATION [LARGE SCALE ANALYSIS] AT SER-242</scope>
    <scope>IDENTIFICATION BY MASS SPECTROMETRY [LARGE SCALE ANALYSIS]</scope>
</reference>
<comment type="function">
    <text evidence="1">GTPase-activating protein (GAP) for ADP ribosylation factor 1 (ARF1). Hydrolysis of ARF1-bound GTP may lead to dissociation of coatomer from Golgi-derived membranes to allow fusion with target membranes (By similarity).</text>
</comment>
<comment type="activity regulation">
    <text evidence="1">GAP activity stimulated by phosphatidylinositol 4,5-bisphosphate (PIP2).</text>
</comment>
<comment type="subcellular location">
    <subcellularLocation>
        <location evidence="1">Cytoplasm</location>
    </subcellularLocation>
    <subcellularLocation>
        <location evidence="1">Golgi apparatus membrane</location>
        <topology evidence="1">Peripheral membrane protein</topology>
        <orientation evidence="1">Cytoplasmic side</orientation>
    </subcellularLocation>
    <text evidence="1">Also found on peripheral punctate structures likely to be endoplasmic reticulum-Golgi intermediate compartment.</text>
</comment>
<keyword id="KW-0963">Cytoplasm</keyword>
<keyword id="KW-0931">ER-Golgi transport</keyword>
<keyword id="KW-0333">Golgi apparatus</keyword>
<keyword id="KW-0343">GTPase activation</keyword>
<keyword id="KW-0472">Membrane</keyword>
<keyword id="KW-0479">Metal-binding</keyword>
<keyword id="KW-0597">Phosphoprotein</keyword>
<keyword id="KW-0653">Protein transport</keyword>
<keyword id="KW-1185">Reference proteome</keyword>
<keyword id="KW-0813">Transport</keyword>
<keyword id="KW-0862">Zinc</keyword>
<keyword id="KW-0863">Zinc-finger</keyword>
<name>ARFG3_RAT</name>
<gene>
    <name evidence="1" type="primary">Arfgap3</name>
</gene>
<proteinExistence type="evidence at protein level"/>
<dbReference type="EMBL" id="BC099081">
    <property type="protein sequence ID" value="AAH99081.1"/>
    <property type="molecule type" value="mRNA"/>
</dbReference>
<dbReference type="RefSeq" id="NP_001037738.1">
    <property type="nucleotide sequence ID" value="NM_001044273.1"/>
</dbReference>
<dbReference type="RefSeq" id="XP_017450552.1">
    <property type="nucleotide sequence ID" value="XM_017595063.1"/>
</dbReference>
<dbReference type="SMR" id="Q4KLN7"/>
<dbReference type="FunCoup" id="Q4KLN7">
    <property type="interactions" value="2735"/>
</dbReference>
<dbReference type="STRING" id="10116.ENSRNOP00000073062"/>
<dbReference type="iPTMnet" id="Q4KLN7"/>
<dbReference type="PhosphoSitePlus" id="Q4KLN7"/>
<dbReference type="jPOST" id="Q4KLN7"/>
<dbReference type="PaxDb" id="10116-ENSRNOP00000065256"/>
<dbReference type="Ensembl" id="ENSRNOT00000074960.3">
    <property type="protein sequence ID" value="ENSRNOP00000065256.3"/>
    <property type="gene ID" value="ENSRNOG00000046472.3"/>
</dbReference>
<dbReference type="GeneID" id="503165"/>
<dbReference type="KEGG" id="rno:503165"/>
<dbReference type="AGR" id="RGD:1560066"/>
<dbReference type="CTD" id="26286"/>
<dbReference type="RGD" id="1560066">
    <property type="gene designation" value="Arfgap3"/>
</dbReference>
<dbReference type="eggNOG" id="KOG0706">
    <property type="taxonomic scope" value="Eukaryota"/>
</dbReference>
<dbReference type="GeneTree" id="ENSGT00940000158466"/>
<dbReference type="InParanoid" id="Q4KLN7"/>
<dbReference type="OrthoDB" id="51930at9989"/>
<dbReference type="PhylomeDB" id="Q4KLN7"/>
<dbReference type="Reactome" id="R-RNO-6807878">
    <property type="pathway name" value="COPI-mediated anterograde transport"/>
</dbReference>
<dbReference type="Reactome" id="R-RNO-6811434">
    <property type="pathway name" value="COPI-dependent Golgi-to-ER retrograde traffic"/>
</dbReference>
<dbReference type="Reactome" id="R-RNO-9013408">
    <property type="pathway name" value="RHOG GTPase cycle"/>
</dbReference>
<dbReference type="PRO" id="PR:Q4KLN7"/>
<dbReference type="Proteomes" id="UP000002494">
    <property type="component" value="Chromosome 7"/>
</dbReference>
<dbReference type="GO" id="GO:0005829">
    <property type="term" value="C:cytosol"/>
    <property type="evidence" value="ECO:0000266"/>
    <property type="project" value="RGD"/>
</dbReference>
<dbReference type="GO" id="GO:0000139">
    <property type="term" value="C:Golgi membrane"/>
    <property type="evidence" value="ECO:0007669"/>
    <property type="project" value="UniProtKB-SubCell"/>
</dbReference>
<dbReference type="GO" id="GO:0098684">
    <property type="term" value="C:photoreceptor ribbon synapse"/>
    <property type="evidence" value="ECO:0000266"/>
    <property type="project" value="RGD"/>
</dbReference>
<dbReference type="GO" id="GO:0048786">
    <property type="term" value="C:presynaptic active zone"/>
    <property type="evidence" value="ECO:0000266"/>
    <property type="project" value="RGD"/>
</dbReference>
<dbReference type="GO" id="GO:0005096">
    <property type="term" value="F:GTPase activator activity"/>
    <property type="evidence" value="ECO:0000266"/>
    <property type="project" value="RGD"/>
</dbReference>
<dbReference type="GO" id="GO:0008270">
    <property type="term" value="F:zinc ion binding"/>
    <property type="evidence" value="ECO:0007669"/>
    <property type="project" value="UniProtKB-KW"/>
</dbReference>
<dbReference type="GO" id="GO:0048205">
    <property type="term" value="P:COPI coating of Golgi vesicle"/>
    <property type="evidence" value="ECO:0000318"/>
    <property type="project" value="GO_Central"/>
</dbReference>
<dbReference type="GO" id="GO:0140238">
    <property type="term" value="P:presynaptic endocytosis"/>
    <property type="evidence" value="ECO:0000266"/>
    <property type="project" value="RGD"/>
</dbReference>
<dbReference type="GO" id="GO:0009306">
    <property type="term" value="P:protein secretion"/>
    <property type="evidence" value="ECO:0000266"/>
    <property type="project" value="RGD"/>
</dbReference>
<dbReference type="CDD" id="cd09028">
    <property type="entry name" value="ArfGap_ArfGap3"/>
    <property type="match status" value="1"/>
</dbReference>
<dbReference type="FunFam" id="1.10.220.150:FF:000004">
    <property type="entry name" value="Putative ADP-ribosylation factor GTPase-activating protein 2"/>
    <property type="match status" value="1"/>
</dbReference>
<dbReference type="Gene3D" id="1.10.220.150">
    <property type="entry name" value="Arf GTPase activating protein"/>
    <property type="match status" value="1"/>
</dbReference>
<dbReference type="InterPro" id="IPR037278">
    <property type="entry name" value="ARFGAP/RecO"/>
</dbReference>
<dbReference type="InterPro" id="IPR001164">
    <property type="entry name" value="ArfGAP_dom"/>
</dbReference>
<dbReference type="InterPro" id="IPR038508">
    <property type="entry name" value="ArfGAP_dom_sf"/>
</dbReference>
<dbReference type="PANTHER" id="PTHR45686">
    <property type="entry name" value="ADP-RIBOSYLATION FACTOR GTPASE ACTIVATING PROTEIN 3, ISOFORM H-RELATED"/>
    <property type="match status" value="1"/>
</dbReference>
<dbReference type="PANTHER" id="PTHR45686:SF1">
    <property type="entry name" value="ADP-RIBOSYLATION FACTOR GTPASE-ACTIVATING PROTEIN 3"/>
    <property type="match status" value="1"/>
</dbReference>
<dbReference type="Pfam" id="PF01412">
    <property type="entry name" value="ArfGap"/>
    <property type="match status" value="1"/>
</dbReference>
<dbReference type="PRINTS" id="PR00405">
    <property type="entry name" value="REVINTRACTNG"/>
</dbReference>
<dbReference type="SMART" id="SM00105">
    <property type="entry name" value="ArfGap"/>
    <property type="match status" value="1"/>
</dbReference>
<dbReference type="SUPFAM" id="SSF57863">
    <property type="entry name" value="ArfGap/RecO-like zinc finger"/>
    <property type="match status" value="1"/>
</dbReference>
<dbReference type="PROSITE" id="PS50115">
    <property type="entry name" value="ARFGAP"/>
    <property type="match status" value="1"/>
</dbReference>
<evidence type="ECO:0000250" key="1">
    <source>
        <dbReference type="UniProtKB" id="Q9NP61"/>
    </source>
</evidence>
<evidence type="ECO:0000255" key="2">
    <source>
        <dbReference type="PROSITE-ProRule" id="PRU00288"/>
    </source>
</evidence>
<evidence type="ECO:0000256" key="3">
    <source>
        <dbReference type="SAM" id="MobiDB-lite"/>
    </source>
</evidence>
<evidence type="ECO:0000312" key="4">
    <source>
        <dbReference type="EMBL" id="AAH99081.1"/>
    </source>
</evidence>
<evidence type="ECO:0007744" key="5">
    <source>
    </source>
</evidence>
<feature type="chain" id="PRO_0000314055" description="ADP-ribosylation factor GTPase-activating protein 3">
    <location>
        <begin position="1"/>
        <end position="525"/>
    </location>
</feature>
<feature type="domain" description="Arf-GAP" evidence="2">
    <location>
        <begin position="10"/>
        <end position="126"/>
    </location>
</feature>
<feature type="zinc finger region" description="C4-type" evidence="2">
    <location>
        <begin position="25"/>
        <end position="48"/>
    </location>
</feature>
<feature type="region of interest" description="Disordered" evidence="3">
    <location>
        <begin position="160"/>
        <end position="233"/>
    </location>
</feature>
<feature type="region of interest" description="Disordered" evidence="3">
    <location>
        <begin position="249"/>
        <end position="271"/>
    </location>
</feature>
<feature type="region of interest" description="Disordered" evidence="3">
    <location>
        <begin position="293"/>
        <end position="364"/>
    </location>
</feature>
<feature type="region of interest" description="Disordered" evidence="3">
    <location>
        <begin position="377"/>
        <end position="428"/>
    </location>
</feature>
<feature type="compositionally biased region" description="Polar residues" evidence="3">
    <location>
        <begin position="162"/>
        <end position="177"/>
    </location>
</feature>
<feature type="compositionally biased region" description="Low complexity" evidence="3">
    <location>
        <begin position="222"/>
        <end position="233"/>
    </location>
</feature>
<feature type="compositionally biased region" description="Basic and acidic residues" evidence="3">
    <location>
        <begin position="293"/>
        <end position="305"/>
    </location>
</feature>
<feature type="compositionally biased region" description="Polar residues" evidence="3">
    <location>
        <begin position="319"/>
        <end position="333"/>
    </location>
</feature>
<feature type="compositionally biased region" description="Low complexity" evidence="3">
    <location>
        <begin position="349"/>
        <end position="363"/>
    </location>
</feature>
<feature type="compositionally biased region" description="Basic and acidic residues" evidence="3">
    <location>
        <begin position="387"/>
        <end position="398"/>
    </location>
</feature>
<feature type="modified residue" description="Phosphoserine" evidence="1">
    <location>
        <position position="232"/>
    </location>
</feature>
<feature type="modified residue" description="Phosphoserine" evidence="5">
    <location>
        <position position="242"/>
    </location>
</feature>
<feature type="modified residue" description="Phosphoserine" evidence="1">
    <location>
        <position position="271"/>
    </location>
</feature>
<feature type="modified residue" description="Phosphoserine" evidence="1">
    <location>
        <position position="275"/>
    </location>
</feature>
<feature type="modified residue" description="Phosphoserine" evidence="1">
    <location>
        <position position="332"/>
    </location>
</feature>
<feature type="modified residue" description="Phosphoserine" evidence="1">
    <location>
        <position position="379"/>
    </location>
</feature>
<feature type="modified residue" description="Phosphoserine" evidence="1">
    <location>
        <position position="437"/>
    </location>
</feature>
<feature type="modified residue" description="Phosphoserine" evidence="1">
    <location>
        <position position="460"/>
    </location>
</feature>
<feature type="modified residue" description="Phosphoserine" evidence="1">
    <location>
        <position position="462"/>
    </location>
</feature>
<feature type="modified residue" description="Phosphoserine" evidence="1">
    <location>
        <position position="464"/>
    </location>
</feature>
<feature type="modified residue" description="Phosphoserine" evidence="1">
    <location>
        <position position="466"/>
    </location>
</feature>
<feature type="modified residue" description="Phosphoserine" evidence="1">
    <location>
        <position position="467"/>
    </location>
</feature>
<organism>
    <name type="scientific">Rattus norvegicus</name>
    <name type="common">Rat</name>
    <dbReference type="NCBI Taxonomy" id="10116"/>
    <lineage>
        <taxon>Eukaryota</taxon>
        <taxon>Metazoa</taxon>
        <taxon>Chordata</taxon>
        <taxon>Craniata</taxon>
        <taxon>Vertebrata</taxon>
        <taxon>Euteleostomi</taxon>
        <taxon>Mammalia</taxon>
        <taxon>Eutheria</taxon>
        <taxon>Euarchontoglires</taxon>
        <taxon>Glires</taxon>
        <taxon>Rodentia</taxon>
        <taxon>Myomorpha</taxon>
        <taxon>Muroidea</taxon>
        <taxon>Muridae</taxon>
        <taxon>Murinae</taxon>
        <taxon>Rattus</taxon>
    </lineage>
</organism>
<protein>
    <recommendedName>
        <fullName>ADP-ribosylation factor GTPase-activating protein 3</fullName>
        <shortName>ARF GAP 3</shortName>
    </recommendedName>
</protein>
<sequence>MGDPSKQDILAIFKRLRSVPTNKVCFDCGAKNPSWASISYGVFLCIDCSGSHRSLGVHLSFIRSTELDSNWSWFQLRCMQVGGNANASSFFHQHGCATKDTNAKYNSRAAQLYREKIKTLATQATRRHGTDLWLDSCAAPPASPPPKEEDFFASHASLEVSGATQASAQPEPASSTPWGLETTPEKHEGGPGQGPSVEGLNTPGKTAPAEVSSIIKKKPNQAKKGLGAKKGSLGAQKLTNTSFTEIEKQAQAVDKRKEQEDLARGTPKEESIVSSLRLAYKDLEIHKKQDERLNLSGQKKAEAERLGMGFGSCRGGISHSVTSDMQTIEQESPTLAKPRRKYQEDPEDSYFSSSSKWSEQSSSRYFDDPMELRSSHFSSWDDSADSYWKKDSSRDPEPATKSTGSSDRPSSRRKPEYEPVGNTDEAQKKFGNVKAISSDMYFGIQSQTDFETRARLERLSTSSSISSADLFDEQRKQTTGNYNLSNVLPNAPDMAQFKQGVRSVAGKLSVFANGVMTSIQDRYGS</sequence>
<accession>Q4KLN7</accession>